<keyword id="KW-0030">Aminoacyl-tRNA synthetase</keyword>
<keyword id="KW-0067">ATP-binding</keyword>
<keyword id="KW-0963">Cytoplasm</keyword>
<keyword id="KW-0436">Ligase</keyword>
<keyword id="KW-0479">Metal-binding</keyword>
<keyword id="KW-0547">Nucleotide-binding</keyword>
<keyword id="KW-0648">Protein biosynthesis</keyword>
<keyword id="KW-0862">Zinc</keyword>
<protein>
    <recommendedName>
        <fullName evidence="1">Cysteine--tRNA ligase</fullName>
        <ecNumber evidence="1">6.1.1.16</ecNumber>
    </recommendedName>
    <alternativeName>
        <fullName evidence="1">Cysteinyl-tRNA synthetase</fullName>
        <shortName evidence="1">CysRS</shortName>
    </alternativeName>
</protein>
<reference key="1">
    <citation type="journal article" date="2008" name="Infect. Immun.">
        <title>Genomic comparison of virulent Rickettsia rickettsii Sheila Smith and avirulent Rickettsia rickettsii Iowa.</title>
        <authorList>
            <person name="Ellison D.W."/>
            <person name="Clark T.R."/>
            <person name="Sturdevant D.E."/>
            <person name="Virtaneva K."/>
            <person name="Porcella S.F."/>
            <person name="Hackstadt T."/>
        </authorList>
    </citation>
    <scope>NUCLEOTIDE SEQUENCE [LARGE SCALE GENOMIC DNA]</scope>
    <source>
        <strain>Iowa</strain>
    </source>
</reference>
<proteinExistence type="inferred from homology"/>
<sequence length="459" mass="53042">MQIQFRLYNTLSRTKEVFNPQDQDNVKMYVCGPTVYYNPHIGNSRSGVVYDLLYRIVIKIFGEKAVKYVRNITDVDDKIIDRAALLGVTIDELTDKVTKEFHKNMAYLGCMLPSIEPKATKHIDVMIAIIERLIAKDHAYIADNHVYFDVLSAPNYTELSNRNLEEMFEGVHVENSKTKKNPQDFVLWKPAKQNESANMNFESPWGLGRPGWHIECSAMSYKYLGENFDIHGGGADLIFPHHTNEIAQSRCAFPSSTYAKYWVHNGFLTVNGEKMSKSLGNFITVRDLMDKQIQGEVVRLFLLSSHYRRPLDYNDKAIEDAKKTLDYWYRAIENINVQKIDLPHDFMQSLLDDMNTPLAVKIINDYAKGVFISKTEEERQLNASAIITCANFIGLMNKSPHEWFNSGVDELYINELVNKRLEAKKHKNWLLADQIRNQLLEEKIILEDQPDGTTIWRKE</sequence>
<name>SYC_RICRO</name>
<accession>B0BW37</accession>
<dbReference type="EC" id="6.1.1.16" evidence="1"/>
<dbReference type="EMBL" id="CP000766">
    <property type="protein sequence ID" value="ABY72063.1"/>
    <property type="molecule type" value="Genomic_DNA"/>
</dbReference>
<dbReference type="RefSeq" id="WP_012150336.1">
    <property type="nucleotide sequence ID" value="NC_010263.3"/>
</dbReference>
<dbReference type="SMR" id="B0BW37"/>
<dbReference type="GeneID" id="79936911"/>
<dbReference type="KEGG" id="rrj:RrIowa_0144"/>
<dbReference type="eggNOG" id="COG0215">
    <property type="taxonomic scope" value="Bacteria"/>
</dbReference>
<dbReference type="HOGENOM" id="CLU_013528_0_1_5"/>
<dbReference type="Proteomes" id="UP000000796">
    <property type="component" value="Chromosome"/>
</dbReference>
<dbReference type="GO" id="GO:0005829">
    <property type="term" value="C:cytosol"/>
    <property type="evidence" value="ECO:0007669"/>
    <property type="project" value="TreeGrafter"/>
</dbReference>
<dbReference type="GO" id="GO:0005524">
    <property type="term" value="F:ATP binding"/>
    <property type="evidence" value="ECO:0007669"/>
    <property type="project" value="UniProtKB-UniRule"/>
</dbReference>
<dbReference type="GO" id="GO:0004817">
    <property type="term" value="F:cysteine-tRNA ligase activity"/>
    <property type="evidence" value="ECO:0007669"/>
    <property type="project" value="UniProtKB-UniRule"/>
</dbReference>
<dbReference type="GO" id="GO:0008270">
    <property type="term" value="F:zinc ion binding"/>
    <property type="evidence" value="ECO:0007669"/>
    <property type="project" value="UniProtKB-UniRule"/>
</dbReference>
<dbReference type="GO" id="GO:0006423">
    <property type="term" value="P:cysteinyl-tRNA aminoacylation"/>
    <property type="evidence" value="ECO:0007669"/>
    <property type="project" value="UniProtKB-UniRule"/>
</dbReference>
<dbReference type="CDD" id="cd00672">
    <property type="entry name" value="CysRS_core"/>
    <property type="match status" value="1"/>
</dbReference>
<dbReference type="FunFam" id="3.40.50.620:FF:000068">
    <property type="entry name" value="Cysteine--tRNA ligase"/>
    <property type="match status" value="1"/>
</dbReference>
<dbReference type="Gene3D" id="1.20.120.1910">
    <property type="entry name" value="Cysteine-tRNA ligase, C-terminal anti-codon recognition domain"/>
    <property type="match status" value="1"/>
</dbReference>
<dbReference type="Gene3D" id="3.40.50.620">
    <property type="entry name" value="HUPs"/>
    <property type="match status" value="1"/>
</dbReference>
<dbReference type="HAMAP" id="MF_00041">
    <property type="entry name" value="Cys_tRNA_synth"/>
    <property type="match status" value="1"/>
</dbReference>
<dbReference type="InterPro" id="IPR015803">
    <property type="entry name" value="Cys-tRNA-ligase"/>
</dbReference>
<dbReference type="InterPro" id="IPR015273">
    <property type="entry name" value="Cys-tRNA-synt_Ia_DALR"/>
</dbReference>
<dbReference type="InterPro" id="IPR024909">
    <property type="entry name" value="Cys-tRNA/MSH_ligase"/>
</dbReference>
<dbReference type="InterPro" id="IPR014729">
    <property type="entry name" value="Rossmann-like_a/b/a_fold"/>
</dbReference>
<dbReference type="InterPro" id="IPR032678">
    <property type="entry name" value="tRNA-synt_1_cat_dom"/>
</dbReference>
<dbReference type="InterPro" id="IPR009080">
    <property type="entry name" value="tRNAsynth_Ia_anticodon-bd"/>
</dbReference>
<dbReference type="NCBIfam" id="TIGR00435">
    <property type="entry name" value="cysS"/>
    <property type="match status" value="1"/>
</dbReference>
<dbReference type="PANTHER" id="PTHR10890:SF3">
    <property type="entry name" value="CYSTEINE--TRNA LIGASE, CYTOPLASMIC"/>
    <property type="match status" value="1"/>
</dbReference>
<dbReference type="PANTHER" id="PTHR10890">
    <property type="entry name" value="CYSTEINYL-TRNA SYNTHETASE"/>
    <property type="match status" value="1"/>
</dbReference>
<dbReference type="Pfam" id="PF01406">
    <property type="entry name" value="tRNA-synt_1e"/>
    <property type="match status" value="1"/>
</dbReference>
<dbReference type="PRINTS" id="PR00983">
    <property type="entry name" value="TRNASYNTHCYS"/>
</dbReference>
<dbReference type="SMART" id="SM00840">
    <property type="entry name" value="DALR_2"/>
    <property type="match status" value="1"/>
</dbReference>
<dbReference type="SUPFAM" id="SSF47323">
    <property type="entry name" value="Anticodon-binding domain of a subclass of class I aminoacyl-tRNA synthetases"/>
    <property type="match status" value="1"/>
</dbReference>
<dbReference type="SUPFAM" id="SSF52374">
    <property type="entry name" value="Nucleotidylyl transferase"/>
    <property type="match status" value="1"/>
</dbReference>
<organism>
    <name type="scientific">Rickettsia rickettsii (strain Iowa)</name>
    <dbReference type="NCBI Taxonomy" id="452659"/>
    <lineage>
        <taxon>Bacteria</taxon>
        <taxon>Pseudomonadati</taxon>
        <taxon>Pseudomonadota</taxon>
        <taxon>Alphaproteobacteria</taxon>
        <taxon>Rickettsiales</taxon>
        <taxon>Rickettsiaceae</taxon>
        <taxon>Rickettsieae</taxon>
        <taxon>Rickettsia</taxon>
        <taxon>spotted fever group</taxon>
    </lineage>
</organism>
<feature type="chain" id="PRO_0000332890" description="Cysteine--tRNA ligase">
    <location>
        <begin position="1"/>
        <end position="459"/>
    </location>
</feature>
<feature type="short sequence motif" description="'HIGH' region">
    <location>
        <begin position="33"/>
        <end position="43"/>
    </location>
</feature>
<feature type="short sequence motif" description="'KMSKS' region">
    <location>
        <begin position="274"/>
        <end position="278"/>
    </location>
</feature>
<feature type="binding site" evidence="1">
    <location>
        <position position="31"/>
    </location>
    <ligand>
        <name>Zn(2+)</name>
        <dbReference type="ChEBI" id="CHEBI:29105"/>
    </ligand>
</feature>
<feature type="binding site" evidence="1">
    <location>
        <position position="216"/>
    </location>
    <ligand>
        <name>Zn(2+)</name>
        <dbReference type="ChEBI" id="CHEBI:29105"/>
    </ligand>
</feature>
<feature type="binding site" evidence="1">
    <location>
        <position position="241"/>
    </location>
    <ligand>
        <name>Zn(2+)</name>
        <dbReference type="ChEBI" id="CHEBI:29105"/>
    </ligand>
</feature>
<feature type="binding site" evidence="1">
    <location>
        <position position="245"/>
    </location>
    <ligand>
        <name>Zn(2+)</name>
        <dbReference type="ChEBI" id="CHEBI:29105"/>
    </ligand>
</feature>
<feature type="binding site" evidence="1">
    <location>
        <position position="277"/>
    </location>
    <ligand>
        <name>ATP</name>
        <dbReference type="ChEBI" id="CHEBI:30616"/>
    </ligand>
</feature>
<gene>
    <name evidence="1" type="primary">cysS</name>
    <name type="ordered locus">RrIowa_0144</name>
</gene>
<evidence type="ECO:0000255" key="1">
    <source>
        <dbReference type="HAMAP-Rule" id="MF_00041"/>
    </source>
</evidence>
<comment type="catalytic activity">
    <reaction evidence="1">
        <text>tRNA(Cys) + L-cysteine + ATP = L-cysteinyl-tRNA(Cys) + AMP + diphosphate</text>
        <dbReference type="Rhea" id="RHEA:17773"/>
        <dbReference type="Rhea" id="RHEA-COMP:9661"/>
        <dbReference type="Rhea" id="RHEA-COMP:9679"/>
        <dbReference type="ChEBI" id="CHEBI:30616"/>
        <dbReference type="ChEBI" id="CHEBI:33019"/>
        <dbReference type="ChEBI" id="CHEBI:35235"/>
        <dbReference type="ChEBI" id="CHEBI:78442"/>
        <dbReference type="ChEBI" id="CHEBI:78517"/>
        <dbReference type="ChEBI" id="CHEBI:456215"/>
        <dbReference type="EC" id="6.1.1.16"/>
    </reaction>
</comment>
<comment type="cofactor">
    <cofactor evidence="1">
        <name>Zn(2+)</name>
        <dbReference type="ChEBI" id="CHEBI:29105"/>
    </cofactor>
    <text evidence="1">Binds 1 zinc ion per subunit.</text>
</comment>
<comment type="subunit">
    <text evidence="1">Monomer.</text>
</comment>
<comment type="subcellular location">
    <subcellularLocation>
        <location evidence="1">Cytoplasm</location>
    </subcellularLocation>
</comment>
<comment type="similarity">
    <text evidence="1">Belongs to the class-I aminoacyl-tRNA synthetase family.</text>
</comment>